<dbReference type="EC" id="3.4.21.-"/>
<dbReference type="EMBL" id="AL939115">
    <property type="protein sequence ID" value="CAB59664.1"/>
    <property type="molecule type" value="Genomic_DNA"/>
</dbReference>
<dbReference type="RefSeq" id="NP_627384.1">
    <property type="nucleotide sequence ID" value="NC_003888.3"/>
</dbReference>
<dbReference type="SMR" id="Q9RKB9"/>
<dbReference type="STRING" id="100226.gene:17760785"/>
<dbReference type="MEROPS" id="S41.006"/>
<dbReference type="PaxDb" id="100226-SCO3168"/>
<dbReference type="KEGG" id="sco:SCO3168"/>
<dbReference type="PATRIC" id="fig|100226.15.peg.3228"/>
<dbReference type="eggNOG" id="COG0793">
    <property type="taxonomic scope" value="Bacteria"/>
</dbReference>
<dbReference type="eggNOG" id="COG4946">
    <property type="taxonomic scope" value="Bacteria"/>
</dbReference>
<dbReference type="HOGENOM" id="CLU_005503_1_0_11"/>
<dbReference type="InParanoid" id="Q9RKB9"/>
<dbReference type="OrthoDB" id="9758793at2"/>
<dbReference type="PhylomeDB" id="Q9RKB9"/>
<dbReference type="Proteomes" id="UP000001973">
    <property type="component" value="Chromosome"/>
</dbReference>
<dbReference type="GO" id="GO:0005737">
    <property type="term" value="C:cytoplasm"/>
    <property type="evidence" value="ECO:0007669"/>
    <property type="project" value="UniProtKB-SubCell"/>
</dbReference>
<dbReference type="GO" id="GO:0008236">
    <property type="term" value="F:serine-type peptidase activity"/>
    <property type="evidence" value="ECO:0000250"/>
    <property type="project" value="UniProtKB"/>
</dbReference>
<dbReference type="GO" id="GO:0006508">
    <property type="term" value="P:proteolysis"/>
    <property type="evidence" value="ECO:0000250"/>
    <property type="project" value="UniProtKB"/>
</dbReference>
<dbReference type="CDD" id="cd10828">
    <property type="entry name" value="cpPDZ_Tricorn-protease"/>
    <property type="match status" value="1"/>
</dbReference>
<dbReference type="CDD" id="cd07562">
    <property type="entry name" value="Peptidase_S41_TRI"/>
    <property type="match status" value="1"/>
</dbReference>
<dbReference type="FunFam" id="2.120.10.60:FF:000002">
    <property type="entry name" value="Tricorn protease homolog"/>
    <property type="match status" value="1"/>
</dbReference>
<dbReference type="FunFam" id="2.130.10.10:FF:001064">
    <property type="entry name" value="Tricorn protease homolog"/>
    <property type="match status" value="1"/>
</dbReference>
<dbReference type="FunFam" id="3.30.750.44:FF:000011">
    <property type="entry name" value="Tricorn protease homolog"/>
    <property type="match status" value="1"/>
</dbReference>
<dbReference type="FunFam" id="3.90.226.10:FF:000056">
    <property type="entry name" value="Tricorn protease homolog"/>
    <property type="match status" value="1"/>
</dbReference>
<dbReference type="Gene3D" id="2.30.42.10">
    <property type="match status" value="1"/>
</dbReference>
<dbReference type="Gene3D" id="3.30.750.44">
    <property type="match status" value="1"/>
</dbReference>
<dbReference type="Gene3D" id="3.90.226.10">
    <property type="entry name" value="2-enoyl-CoA Hydratase, Chain A, domain 1"/>
    <property type="match status" value="1"/>
</dbReference>
<dbReference type="Gene3D" id="2.120.10.60">
    <property type="entry name" value="Tricorn protease N-terminal domain"/>
    <property type="match status" value="1"/>
</dbReference>
<dbReference type="Gene3D" id="2.130.10.10">
    <property type="entry name" value="YVTN repeat-like/Quinoprotein amine dehydrogenase"/>
    <property type="match status" value="2"/>
</dbReference>
<dbReference type="InterPro" id="IPR029045">
    <property type="entry name" value="ClpP/crotonase-like_dom_sf"/>
</dbReference>
<dbReference type="InterPro" id="IPR011659">
    <property type="entry name" value="PD40"/>
</dbReference>
<dbReference type="InterPro" id="IPR036034">
    <property type="entry name" value="PDZ_sf"/>
</dbReference>
<dbReference type="InterPro" id="IPR005151">
    <property type="entry name" value="Tail-specific_protease"/>
</dbReference>
<dbReference type="InterPro" id="IPR028204">
    <property type="entry name" value="Tricorn_C1"/>
</dbReference>
<dbReference type="InterPro" id="IPR029414">
    <property type="entry name" value="Tricorn_PDZ"/>
</dbReference>
<dbReference type="InterPro" id="IPR012393">
    <property type="entry name" value="Tricorn_protease"/>
</dbReference>
<dbReference type="InterPro" id="IPR015943">
    <property type="entry name" value="WD40/YVTN_repeat-like_dom_sf"/>
</dbReference>
<dbReference type="PANTHER" id="PTHR43253">
    <property type="entry name" value="TRICORN PROTEASE HOMOLOG 2-RELATED"/>
    <property type="match status" value="1"/>
</dbReference>
<dbReference type="PANTHER" id="PTHR43253:SF1">
    <property type="entry name" value="TRICORN PROTEASE HOMOLOG 2-RELATED"/>
    <property type="match status" value="1"/>
</dbReference>
<dbReference type="Pfam" id="PF07676">
    <property type="entry name" value="PD40"/>
    <property type="match status" value="2"/>
</dbReference>
<dbReference type="Pfam" id="PF14685">
    <property type="entry name" value="PDZ_Tricorn"/>
    <property type="match status" value="1"/>
</dbReference>
<dbReference type="Pfam" id="PF03572">
    <property type="entry name" value="Peptidase_S41"/>
    <property type="match status" value="1"/>
</dbReference>
<dbReference type="Pfam" id="PF14684">
    <property type="entry name" value="Tricorn_C1"/>
    <property type="match status" value="1"/>
</dbReference>
<dbReference type="PIRSF" id="PIRSF036421">
    <property type="entry name" value="Tricorn_protease"/>
    <property type="match status" value="1"/>
</dbReference>
<dbReference type="SMART" id="SM00245">
    <property type="entry name" value="TSPc"/>
    <property type="match status" value="1"/>
</dbReference>
<dbReference type="SUPFAM" id="SSF52096">
    <property type="entry name" value="ClpP/crotonase"/>
    <property type="match status" value="1"/>
</dbReference>
<dbReference type="SUPFAM" id="SSF50156">
    <property type="entry name" value="PDZ domain-like"/>
    <property type="match status" value="1"/>
</dbReference>
<dbReference type="SUPFAM" id="SSF69322">
    <property type="entry name" value="Tricorn protease domain 2"/>
    <property type="match status" value="1"/>
</dbReference>
<dbReference type="SUPFAM" id="SSF69304">
    <property type="entry name" value="Tricorn protease N-terminal domain"/>
    <property type="match status" value="1"/>
</dbReference>
<accession>Q9RKB9</accession>
<protein>
    <recommendedName>
        <fullName>Putative tricorn protease homolog 2</fullName>
        <ecNumber>3.4.21.-</ecNumber>
    </recommendedName>
</protein>
<reference key="1">
    <citation type="journal article" date="2002" name="Nature">
        <title>Complete genome sequence of the model actinomycete Streptomyces coelicolor A3(2).</title>
        <authorList>
            <person name="Bentley S.D."/>
            <person name="Chater K.F."/>
            <person name="Cerdeno-Tarraga A.-M."/>
            <person name="Challis G.L."/>
            <person name="Thomson N.R."/>
            <person name="James K.D."/>
            <person name="Harris D.E."/>
            <person name="Quail M.A."/>
            <person name="Kieser H."/>
            <person name="Harper D."/>
            <person name="Bateman A."/>
            <person name="Brown S."/>
            <person name="Chandra G."/>
            <person name="Chen C.W."/>
            <person name="Collins M."/>
            <person name="Cronin A."/>
            <person name="Fraser A."/>
            <person name="Goble A."/>
            <person name="Hidalgo J."/>
            <person name="Hornsby T."/>
            <person name="Howarth S."/>
            <person name="Huang C.-H."/>
            <person name="Kieser T."/>
            <person name="Larke L."/>
            <person name="Murphy L.D."/>
            <person name="Oliver K."/>
            <person name="O'Neil S."/>
            <person name="Rabbinowitsch E."/>
            <person name="Rajandream M.A."/>
            <person name="Rutherford K.M."/>
            <person name="Rutter S."/>
            <person name="Seeger K."/>
            <person name="Saunders D."/>
            <person name="Sharp S."/>
            <person name="Squares R."/>
            <person name="Squares S."/>
            <person name="Taylor K."/>
            <person name="Warren T."/>
            <person name="Wietzorrek A."/>
            <person name="Woodward J.R."/>
            <person name="Barrell B.G."/>
            <person name="Parkhill J."/>
            <person name="Hopwood D.A."/>
        </authorList>
    </citation>
    <scope>NUCLEOTIDE SEQUENCE [LARGE SCALE GENOMIC DNA]</scope>
    <source>
        <strain>ATCC BAA-471 / A3(2) / M145</strain>
    </source>
</reference>
<name>TRI2_STRCO</name>
<proteinExistence type="inferred from homology"/>
<keyword id="KW-0963">Cytoplasm</keyword>
<keyword id="KW-0378">Hydrolase</keyword>
<keyword id="KW-0645">Protease</keyword>
<keyword id="KW-1185">Reference proteome</keyword>
<keyword id="KW-0720">Serine protease</keyword>
<gene>
    <name type="primary">tri2</name>
    <name type="ordered locus">SCO3168</name>
    <name type="ORF">SCE87.19</name>
</gene>
<organism>
    <name type="scientific">Streptomyces coelicolor (strain ATCC BAA-471 / A3(2) / M145)</name>
    <dbReference type="NCBI Taxonomy" id="100226"/>
    <lineage>
        <taxon>Bacteria</taxon>
        <taxon>Bacillati</taxon>
        <taxon>Actinomycetota</taxon>
        <taxon>Actinomycetes</taxon>
        <taxon>Kitasatosporales</taxon>
        <taxon>Streptomycetaceae</taxon>
        <taxon>Streptomyces</taxon>
        <taxon>Streptomyces albidoflavus group</taxon>
    </lineage>
</organism>
<comment type="function">
    <text evidence="1">Degrades oligopeptides in a sequential manner.</text>
</comment>
<comment type="subcellular location">
    <subcellularLocation>
        <location evidence="1">Cytoplasm</location>
    </subcellularLocation>
</comment>
<comment type="similarity">
    <text evidence="4">Belongs to the peptidase S41B family.</text>
</comment>
<feature type="chain" id="PRO_0000207200" description="Putative tricorn protease homolog 2">
    <location>
        <begin position="1"/>
        <end position="1171"/>
    </location>
</feature>
<feature type="region of interest" description="Disordered" evidence="3">
    <location>
        <begin position="432"/>
        <end position="498"/>
    </location>
</feature>
<feature type="region of interest" description="PDZ-like">
    <location>
        <begin position="842"/>
        <end position="941"/>
    </location>
</feature>
<feature type="region of interest" description="Disordered" evidence="3">
    <location>
        <begin position="1149"/>
        <end position="1171"/>
    </location>
</feature>
<feature type="compositionally biased region" description="Low complexity" evidence="3">
    <location>
        <begin position="444"/>
        <end position="456"/>
    </location>
</feature>
<feature type="compositionally biased region" description="Low complexity" evidence="3">
    <location>
        <begin position="466"/>
        <end position="498"/>
    </location>
</feature>
<feature type="compositionally biased region" description="Basic and acidic residues" evidence="3">
    <location>
        <begin position="1159"/>
        <end position="1171"/>
    </location>
</feature>
<feature type="active site" description="Charge relay system" evidence="1">
    <location>
        <position position="827"/>
    </location>
</feature>
<feature type="active site" description="Nucleophile" evidence="2">
    <location>
        <position position="1051"/>
    </location>
</feature>
<feature type="active site" description="Charge relay system" evidence="2">
    <location>
        <position position="1109"/>
    </location>
</feature>
<feature type="binding site" evidence="2">
    <location>
        <begin position="1002"/>
        <end position="1004"/>
    </location>
    <ligand>
        <name>substrate</name>
    </ligand>
</feature>
<feature type="binding site" evidence="2">
    <location>
        <begin position="1079"/>
        <end position="1081"/>
    </location>
    <ligand>
        <name>substrate</name>
    </ligand>
</feature>
<feature type="site" description="Transition state stabilizer; via amide nitrogen" evidence="2">
    <location>
        <position position="1052"/>
    </location>
</feature>
<evidence type="ECO:0000250" key="1"/>
<evidence type="ECO:0000250" key="2">
    <source>
        <dbReference type="UniProtKB" id="P96086"/>
    </source>
</evidence>
<evidence type="ECO:0000256" key="3">
    <source>
        <dbReference type="SAM" id="MobiDB-lite"/>
    </source>
</evidence>
<evidence type="ECO:0000305" key="4"/>
<sequence>MRGARKSMGRVSYLRLPHLSGDQLCFVAEDDLWLASLDGPGRAWRLTVDRTKAGPPRFSPDGRHIAYTSWRTLVPEVHLVPVDGGPGRQLTHWGGLDTRVCGWSPPDPDGTTAVLAVASHGEPFSHLTWAYKVTPDGDPGRKLPWGPVTDIQAADLDGERRTLLLTGTPPHEPAAWKRYRGGATGRLWLHGERLLPDLGGHLSAPMFVGGRIAFLSDHEGVGNLYSCAQDGTGLRRHTDHDAFYARNAASDGTRVVYQCAGDLWIVDDLAPGSAPRRLDVRLSGPRAGRRTHQVPAAQHVGGISVDETGRASAVVVRGSLYWLTHRDGPARTIADTPGVRVRLPEMLGESGRIAYVTDAEGEDAVEISYLPRATGGRAARRLASGRLGRVLELVSDPAGDRLAVASHDGRLLILDVAEPDTEVTLALEAVDAGYPPDAGDEDAAGTAARADSAPDAPAEDTDARDIAAGTGTGDIADADAAAGGTVTPGSPGTPATAGGQVTELIRSVNGPVRDLAFSPDGTWLTWSHPGIGRTLRQIKMARIDGPEGTLVVDVTNGRFEDENPVFTRDGRYLAFLSWRGFDPVYDVHTGDLSFPLGCRPYLVPLSSATPSPFALNPEGRPAAGGLDPLEDEPGEGGAVMVEVEGLESRVTPFPVTASKYSALEPVAGGGLVWLRWPISGALGETFANPADPSERPTLEHFNLAKAKKSELVDHLDWFRVSGDGSRLVVLDEGELRAVPASEVGDGDSTTWIDLRRILHEVDPAAEWRQAYDEAGRLIRAYFWDPGMCGIDWDAVLDQYRPLLERVASPDEFADLLREVLGELGTSHAYVVAARRNEGPAHYQRWQGLLGANLACRDGRWLVRRILPGDSSDSKARSPLAGTGIRDGAVLTHVDGRPVDPVLGPSPLLAGAGGTTVELTFAPAEGCQGPSRRVAVVPLVDERPLRYQDWVAKRREVVRELSGGRCGYLHIPDMGGSGWAQFNRDLRMEVSRPALIVDVRGNAGGHISELVIEKLTRTILGWDLTRDAQPVSYTSNAPRGPVVAVADEATSSDGDMITAAFKLLRLGPVVGQRTWGGVVGMTGRHRLGDGSVITVPMNAAWFDAYGWSVENYGVAPDVEALRTPLDWAEGRYPVLDEAVRLALELLETNPPATPPGYEAVPDRSRPPLPPRE</sequence>